<sequence>TVIGLQYCDSTTCGTTGQKLLLLLFIVVGACVVCVWISLQNYPYPVWASCLASYLTLVLLSWLQVLTYFDYFFLCLIILGIPSVLLTLLIHLAIQ</sequence>
<accession>P27227</accession>
<protein>
    <recommendedName>
        <fullName>Probable protein E5</fullName>
    </recommendedName>
</protein>
<proteinExistence type="predicted"/>
<gene>
    <name type="primary">E5</name>
</gene>
<reference key="1">
    <citation type="journal article" date="1992" name="Virology">
        <title>Human papillomavirus type 42: new sequences, conserved genome organization.</title>
        <authorList>
            <person name="Philipp W."/>
            <person name="Honore N."/>
            <person name="Sapp M."/>
            <person name="Cole S.T."/>
            <person name="Streeck R.E."/>
        </authorList>
    </citation>
    <scope>NUCLEOTIDE SEQUENCE [GENOMIC DNA]</scope>
</reference>
<organism>
    <name type="scientific">Human papillomavirus 42</name>
    <dbReference type="NCBI Taxonomy" id="10590"/>
    <lineage>
        <taxon>Viruses</taxon>
        <taxon>Monodnaviria</taxon>
        <taxon>Shotokuvirae</taxon>
        <taxon>Cossaviricota</taxon>
        <taxon>Papovaviricetes</taxon>
        <taxon>Zurhausenvirales</taxon>
        <taxon>Papillomaviridae</taxon>
        <taxon>Firstpapillomavirinae</taxon>
        <taxon>Alphapapillomavirus</taxon>
        <taxon>Alphapapillomavirus 1</taxon>
    </lineage>
</organism>
<keyword id="KW-0244">Early protein</keyword>
<dbReference type="EMBL" id="M73236">
    <property type="protein sequence ID" value="AAA47046.1"/>
    <property type="molecule type" value="Genomic_DNA"/>
</dbReference>
<dbReference type="PIR" id="D39451">
    <property type="entry name" value="W5WL42"/>
</dbReference>
<dbReference type="SMR" id="P27227"/>
<dbReference type="Proteomes" id="UP000009122">
    <property type="component" value="Genome"/>
</dbReference>
<feature type="chain" id="PRO_0000133296" description="Probable protein E5">
    <location>
        <begin position="1"/>
        <end position="95"/>
    </location>
</feature>
<name>VE5_HPV42</name>
<organismHost>
    <name type="scientific">Homo sapiens</name>
    <name type="common">Human</name>
    <dbReference type="NCBI Taxonomy" id="9606"/>
</organismHost>